<comment type="function">
    <text>Actins are highly conserved proteins that are involved in various types of cell motility and are ubiquitously expressed in all eukaryotic cells.</text>
</comment>
<comment type="catalytic activity">
    <reaction evidence="1">
        <text>ATP + H2O = ADP + phosphate + H(+)</text>
        <dbReference type="Rhea" id="RHEA:13065"/>
        <dbReference type="ChEBI" id="CHEBI:15377"/>
        <dbReference type="ChEBI" id="CHEBI:15378"/>
        <dbReference type="ChEBI" id="CHEBI:30616"/>
        <dbReference type="ChEBI" id="CHEBI:43474"/>
        <dbReference type="ChEBI" id="CHEBI:456216"/>
    </reaction>
</comment>
<comment type="subcellular location">
    <subcellularLocation>
        <location>Cytoplasm</location>
        <location>Cytoskeleton</location>
    </subcellularLocation>
</comment>
<comment type="similarity">
    <text evidence="2">Belongs to the actin family.</text>
</comment>
<name>ACT2_DIBDE</name>
<feature type="chain" id="PRO_0000088929" description="Actin-2">
    <location>
        <begin position="1"/>
        <end position="376"/>
    </location>
</feature>
<keyword id="KW-0067">ATP-binding</keyword>
<keyword id="KW-0963">Cytoplasm</keyword>
<keyword id="KW-0206">Cytoskeleton</keyword>
<keyword id="KW-0378">Hydrolase</keyword>
<keyword id="KW-0547">Nucleotide-binding</keyword>
<gene>
    <name type="primary">ACT2</name>
</gene>
<reference key="1">
    <citation type="journal article" date="1997" name="J. Mol. Evol.">
        <title>Isolation and characterization of five actin cDNAs from the cestode Diphyllobothrium dendriticum: a phylogenetic study of the multigene family.</title>
        <authorList>
            <person name="Wahlberg M.H."/>
            <person name="Johnson M.S."/>
        </authorList>
    </citation>
    <scope>NUCLEOTIDE SEQUENCE [MRNA]</scope>
</reference>
<accession>P53456</accession>
<evidence type="ECO:0000250" key="1">
    <source>
        <dbReference type="UniProtKB" id="P68137"/>
    </source>
</evidence>
<evidence type="ECO:0000305" key="2"/>
<sequence>MGDEEVQALVVDNGSGMCKAGFAGDDAPRAVFPSIVGRPRHQGVMVGMGQKDSYVGDEAQSKRGILTLKYPIEHGIVTNWDDMEKIWHHTFYNELRVAPEEHPVLLTEAPLNPKANREKMTRIMFETFNTPAMYVGIQAVLSLYASGRTTGIVLDSGDGVTHSVPIYEGYALPHAILRLDLAGRDLTDYLMKILTERGYSFTTTAEREIVRDIKEKLCYVALDFEQEMATAASSSSLEKSYELPDGQVITIGNERFRCPESLFQPSFLGMESAGIHESTFNAIMKCDVDIRKDLYANTVLSGGTTMYPGIADRMQKEITSLAPSTMKIKIVAPPERKYSVWIGGSILASLSTFQQMWISKQEYDESGPGIVHRKCF</sequence>
<protein>
    <recommendedName>
        <fullName>Actin-2</fullName>
        <ecNumber evidence="1">3.6.4.-</ecNumber>
    </recommendedName>
</protein>
<proteinExistence type="evidence at transcript level"/>
<organism>
    <name type="scientific">Dibothriocephalus dendriticus</name>
    <name type="common">Tapeworm</name>
    <name type="synonym">Diphyllobothrium dendriticum</name>
    <dbReference type="NCBI Taxonomy" id="28845"/>
    <lineage>
        <taxon>Eukaryota</taxon>
        <taxon>Metazoa</taxon>
        <taxon>Spiralia</taxon>
        <taxon>Lophotrochozoa</taxon>
        <taxon>Platyhelminthes</taxon>
        <taxon>Cestoda</taxon>
        <taxon>Eucestoda</taxon>
        <taxon>Diphyllobothriidea</taxon>
        <taxon>Diphyllobothriidae</taxon>
        <taxon>Dibothriocephalus</taxon>
    </lineage>
</organism>
<dbReference type="EC" id="3.6.4.-" evidence="1"/>
<dbReference type="EMBL" id="U27833">
    <property type="protein sequence ID" value="AAA82600.1"/>
    <property type="molecule type" value="mRNA"/>
</dbReference>
<dbReference type="SMR" id="P53456"/>
<dbReference type="GO" id="GO:0005737">
    <property type="term" value="C:cytoplasm"/>
    <property type="evidence" value="ECO:0007669"/>
    <property type="project" value="UniProtKB-KW"/>
</dbReference>
<dbReference type="GO" id="GO:0005856">
    <property type="term" value="C:cytoskeleton"/>
    <property type="evidence" value="ECO:0007669"/>
    <property type="project" value="UniProtKB-SubCell"/>
</dbReference>
<dbReference type="GO" id="GO:0005524">
    <property type="term" value="F:ATP binding"/>
    <property type="evidence" value="ECO:0007669"/>
    <property type="project" value="UniProtKB-KW"/>
</dbReference>
<dbReference type="GO" id="GO:0016787">
    <property type="term" value="F:hydrolase activity"/>
    <property type="evidence" value="ECO:0007669"/>
    <property type="project" value="UniProtKB-KW"/>
</dbReference>
<dbReference type="CDD" id="cd10224">
    <property type="entry name" value="ASKHA_NBD_actin"/>
    <property type="match status" value="1"/>
</dbReference>
<dbReference type="FunFam" id="3.30.420.40:FF:000131">
    <property type="entry name" value="Actin, alpha skeletal muscle"/>
    <property type="match status" value="1"/>
</dbReference>
<dbReference type="FunFam" id="3.30.420.40:FF:000291">
    <property type="entry name" value="Actin, alpha skeletal muscle"/>
    <property type="match status" value="1"/>
</dbReference>
<dbReference type="FunFam" id="3.90.640.10:FF:000047">
    <property type="entry name" value="Actin, alpha skeletal muscle"/>
    <property type="match status" value="1"/>
</dbReference>
<dbReference type="FunFam" id="3.30.420.40:FF:000058">
    <property type="entry name" value="Putative actin-related protein 5"/>
    <property type="match status" value="1"/>
</dbReference>
<dbReference type="Gene3D" id="3.30.420.40">
    <property type="match status" value="2"/>
</dbReference>
<dbReference type="Gene3D" id="3.90.640.10">
    <property type="entry name" value="Actin, Chain A, domain 4"/>
    <property type="match status" value="1"/>
</dbReference>
<dbReference type="InterPro" id="IPR004000">
    <property type="entry name" value="Actin"/>
</dbReference>
<dbReference type="InterPro" id="IPR020902">
    <property type="entry name" value="Actin/actin-like_CS"/>
</dbReference>
<dbReference type="InterPro" id="IPR004001">
    <property type="entry name" value="Actin_CS"/>
</dbReference>
<dbReference type="InterPro" id="IPR043129">
    <property type="entry name" value="ATPase_NBD"/>
</dbReference>
<dbReference type="PANTHER" id="PTHR11937">
    <property type="entry name" value="ACTIN"/>
    <property type="match status" value="1"/>
</dbReference>
<dbReference type="Pfam" id="PF00022">
    <property type="entry name" value="Actin"/>
    <property type="match status" value="1"/>
</dbReference>
<dbReference type="PRINTS" id="PR00190">
    <property type="entry name" value="ACTIN"/>
</dbReference>
<dbReference type="SMART" id="SM00268">
    <property type="entry name" value="ACTIN"/>
    <property type="match status" value="1"/>
</dbReference>
<dbReference type="SUPFAM" id="SSF53067">
    <property type="entry name" value="Actin-like ATPase domain"/>
    <property type="match status" value="2"/>
</dbReference>
<dbReference type="PROSITE" id="PS00406">
    <property type="entry name" value="ACTINS_1"/>
    <property type="match status" value="1"/>
</dbReference>
<dbReference type="PROSITE" id="PS00432">
    <property type="entry name" value="ACTINS_2"/>
    <property type="match status" value="1"/>
</dbReference>
<dbReference type="PROSITE" id="PS01132">
    <property type="entry name" value="ACTINS_ACT_LIKE"/>
    <property type="match status" value="1"/>
</dbReference>